<comment type="function">
    <text evidence="1">3'-to-5' exoribonuclease specific for small oligoribonucleotides.</text>
</comment>
<comment type="subcellular location">
    <subcellularLocation>
        <location evidence="1">Cytoplasm</location>
    </subcellularLocation>
</comment>
<comment type="similarity">
    <text evidence="1">Belongs to the oligoribonuclease family.</text>
</comment>
<accession>Q7VVH7</accession>
<protein>
    <recommendedName>
        <fullName evidence="1">Oligoribonuclease</fullName>
        <ecNumber evidence="1">3.1.15.-</ecNumber>
    </recommendedName>
</protein>
<evidence type="ECO:0000255" key="1">
    <source>
        <dbReference type="HAMAP-Rule" id="MF_00045"/>
    </source>
</evidence>
<dbReference type="EC" id="3.1.15.-" evidence="1"/>
<dbReference type="EMBL" id="BX640419">
    <property type="protein sequence ID" value="CAE42963.1"/>
    <property type="molecule type" value="Genomic_DNA"/>
</dbReference>
<dbReference type="RefSeq" id="NP_881299.1">
    <property type="nucleotide sequence ID" value="NC_002929.2"/>
</dbReference>
<dbReference type="RefSeq" id="WP_003813303.1">
    <property type="nucleotide sequence ID" value="NZ_CP039022.1"/>
</dbReference>
<dbReference type="SMR" id="Q7VVH7"/>
<dbReference type="STRING" id="257313.BP2687"/>
<dbReference type="PaxDb" id="257313-BP2687"/>
<dbReference type="GeneID" id="93203429"/>
<dbReference type="KEGG" id="bpe:BP2687"/>
<dbReference type="PATRIC" id="fig|257313.5.peg.2894"/>
<dbReference type="eggNOG" id="COG1949">
    <property type="taxonomic scope" value="Bacteria"/>
</dbReference>
<dbReference type="HOGENOM" id="CLU_064761_1_1_4"/>
<dbReference type="Proteomes" id="UP000002676">
    <property type="component" value="Chromosome"/>
</dbReference>
<dbReference type="GO" id="GO:0005737">
    <property type="term" value="C:cytoplasm"/>
    <property type="evidence" value="ECO:0007669"/>
    <property type="project" value="UniProtKB-SubCell"/>
</dbReference>
<dbReference type="GO" id="GO:0000175">
    <property type="term" value="F:3'-5'-RNA exonuclease activity"/>
    <property type="evidence" value="ECO:0007669"/>
    <property type="project" value="InterPro"/>
</dbReference>
<dbReference type="GO" id="GO:0003676">
    <property type="term" value="F:nucleic acid binding"/>
    <property type="evidence" value="ECO:0007669"/>
    <property type="project" value="InterPro"/>
</dbReference>
<dbReference type="GO" id="GO:0006259">
    <property type="term" value="P:DNA metabolic process"/>
    <property type="evidence" value="ECO:0007669"/>
    <property type="project" value="UniProtKB-ARBA"/>
</dbReference>
<dbReference type="CDD" id="cd06135">
    <property type="entry name" value="Orn"/>
    <property type="match status" value="1"/>
</dbReference>
<dbReference type="FunFam" id="3.30.420.10:FF:000003">
    <property type="entry name" value="Oligoribonuclease"/>
    <property type="match status" value="1"/>
</dbReference>
<dbReference type="Gene3D" id="3.30.420.10">
    <property type="entry name" value="Ribonuclease H-like superfamily/Ribonuclease H"/>
    <property type="match status" value="1"/>
</dbReference>
<dbReference type="HAMAP" id="MF_00045">
    <property type="entry name" value="Oligoribonuclease"/>
    <property type="match status" value="1"/>
</dbReference>
<dbReference type="InterPro" id="IPR013520">
    <property type="entry name" value="Exonuclease_RNaseT/DNA_pol3"/>
</dbReference>
<dbReference type="InterPro" id="IPR022894">
    <property type="entry name" value="Oligoribonuclease"/>
</dbReference>
<dbReference type="InterPro" id="IPR012337">
    <property type="entry name" value="RNaseH-like_sf"/>
</dbReference>
<dbReference type="InterPro" id="IPR036397">
    <property type="entry name" value="RNaseH_sf"/>
</dbReference>
<dbReference type="NCBIfam" id="NF003765">
    <property type="entry name" value="PRK05359.1"/>
    <property type="match status" value="1"/>
</dbReference>
<dbReference type="PANTHER" id="PTHR11046">
    <property type="entry name" value="OLIGORIBONUCLEASE, MITOCHONDRIAL"/>
    <property type="match status" value="1"/>
</dbReference>
<dbReference type="PANTHER" id="PTHR11046:SF0">
    <property type="entry name" value="OLIGORIBONUCLEASE, MITOCHONDRIAL"/>
    <property type="match status" value="1"/>
</dbReference>
<dbReference type="Pfam" id="PF00929">
    <property type="entry name" value="RNase_T"/>
    <property type="match status" value="1"/>
</dbReference>
<dbReference type="SMART" id="SM00479">
    <property type="entry name" value="EXOIII"/>
    <property type="match status" value="1"/>
</dbReference>
<dbReference type="SUPFAM" id="SSF53098">
    <property type="entry name" value="Ribonuclease H-like"/>
    <property type="match status" value="1"/>
</dbReference>
<sequence>MAANENRLVWLDMEMTGLDPEKERIIEVAVVVTEADLTVVAEGPVLVVHQPDSLLDAMDNWNKSTHGKSGLIEKVKASTLGEAQAEQILLEFLAEHVPAGKSPLCGNTISQDRRFMYAYMPNLERFFHYRNLDVSTLKELARRWAPAVYKGFDKKSRHEALADIYESIDELKYYREHLLKV</sequence>
<reference key="1">
    <citation type="journal article" date="2003" name="Nat. Genet.">
        <title>Comparative analysis of the genome sequences of Bordetella pertussis, Bordetella parapertussis and Bordetella bronchiseptica.</title>
        <authorList>
            <person name="Parkhill J."/>
            <person name="Sebaihia M."/>
            <person name="Preston A."/>
            <person name="Murphy L.D."/>
            <person name="Thomson N.R."/>
            <person name="Harris D.E."/>
            <person name="Holden M.T.G."/>
            <person name="Churcher C.M."/>
            <person name="Bentley S.D."/>
            <person name="Mungall K.L."/>
            <person name="Cerdeno-Tarraga A.-M."/>
            <person name="Temple L."/>
            <person name="James K.D."/>
            <person name="Harris B."/>
            <person name="Quail M.A."/>
            <person name="Achtman M."/>
            <person name="Atkin R."/>
            <person name="Baker S."/>
            <person name="Basham D."/>
            <person name="Bason N."/>
            <person name="Cherevach I."/>
            <person name="Chillingworth T."/>
            <person name="Collins M."/>
            <person name="Cronin A."/>
            <person name="Davis P."/>
            <person name="Doggett J."/>
            <person name="Feltwell T."/>
            <person name="Goble A."/>
            <person name="Hamlin N."/>
            <person name="Hauser H."/>
            <person name="Holroyd S."/>
            <person name="Jagels K."/>
            <person name="Leather S."/>
            <person name="Moule S."/>
            <person name="Norberczak H."/>
            <person name="O'Neil S."/>
            <person name="Ormond D."/>
            <person name="Price C."/>
            <person name="Rabbinowitsch E."/>
            <person name="Rutter S."/>
            <person name="Sanders M."/>
            <person name="Saunders D."/>
            <person name="Seeger K."/>
            <person name="Sharp S."/>
            <person name="Simmonds M."/>
            <person name="Skelton J."/>
            <person name="Squares R."/>
            <person name="Squares S."/>
            <person name="Stevens K."/>
            <person name="Unwin L."/>
            <person name="Whitehead S."/>
            <person name="Barrell B.G."/>
            <person name="Maskell D.J."/>
        </authorList>
    </citation>
    <scope>NUCLEOTIDE SEQUENCE [LARGE SCALE GENOMIC DNA]</scope>
    <source>
        <strain>Tohama I / ATCC BAA-589 / NCTC 13251</strain>
    </source>
</reference>
<feature type="chain" id="PRO_0000111021" description="Oligoribonuclease">
    <location>
        <begin position="1"/>
        <end position="181"/>
    </location>
</feature>
<feature type="domain" description="Exonuclease" evidence="1">
    <location>
        <begin position="8"/>
        <end position="171"/>
    </location>
</feature>
<feature type="active site" evidence="1">
    <location>
        <position position="129"/>
    </location>
</feature>
<gene>
    <name evidence="1" type="primary">orn</name>
    <name type="ordered locus">BP2687</name>
</gene>
<proteinExistence type="inferred from homology"/>
<keyword id="KW-0963">Cytoplasm</keyword>
<keyword id="KW-0269">Exonuclease</keyword>
<keyword id="KW-0378">Hydrolase</keyword>
<keyword id="KW-0540">Nuclease</keyword>
<keyword id="KW-1185">Reference proteome</keyword>
<organism>
    <name type="scientific">Bordetella pertussis (strain Tohama I / ATCC BAA-589 / NCTC 13251)</name>
    <dbReference type="NCBI Taxonomy" id="257313"/>
    <lineage>
        <taxon>Bacteria</taxon>
        <taxon>Pseudomonadati</taxon>
        <taxon>Pseudomonadota</taxon>
        <taxon>Betaproteobacteria</taxon>
        <taxon>Burkholderiales</taxon>
        <taxon>Alcaligenaceae</taxon>
        <taxon>Bordetella</taxon>
    </lineage>
</organism>
<name>ORN_BORPE</name>